<organism>
    <name type="scientific">Mus musculus</name>
    <name type="common">Mouse</name>
    <dbReference type="NCBI Taxonomy" id="10090"/>
    <lineage>
        <taxon>Eukaryota</taxon>
        <taxon>Metazoa</taxon>
        <taxon>Chordata</taxon>
        <taxon>Craniata</taxon>
        <taxon>Vertebrata</taxon>
        <taxon>Euteleostomi</taxon>
        <taxon>Mammalia</taxon>
        <taxon>Eutheria</taxon>
        <taxon>Euarchontoglires</taxon>
        <taxon>Glires</taxon>
        <taxon>Rodentia</taxon>
        <taxon>Myomorpha</taxon>
        <taxon>Muroidea</taxon>
        <taxon>Muridae</taxon>
        <taxon>Murinae</taxon>
        <taxon>Mus</taxon>
        <taxon>Mus</taxon>
    </lineage>
</organism>
<gene>
    <name type="primary">Zbtb5</name>
    <name type="synonym">Kiaa0354</name>
</gene>
<proteinExistence type="evidence at transcript level"/>
<reference key="1">
    <citation type="submission" date="2004-05" db="EMBL/GenBank/DDBJ databases">
        <title>Cloning and characterization of a novel mouse gene ZNF-POZ cDNA encoding a POZ/BTB domain zinc-finger protein.</title>
        <authorList>
            <person name="Li Y.H."/>
            <person name="Tang X.J."/>
            <person name="Chen W."/>
            <person name="Li Y.P."/>
        </authorList>
    </citation>
    <scope>NUCLEOTIDE SEQUENCE [MRNA]</scope>
    <source>
        <strain>C57BL/6J</strain>
    </source>
</reference>
<reference key="2">
    <citation type="journal article" date="2005" name="Science">
        <title>The transcriptional landscape of the mammalian genome.</title>
        <authorList>
            <person name="Carninci P."/>
            <person name="Kasukawa T."/>
            <person name="Katayama S."/>
            <person name="Gough J."/>
            <person name="Frith M.C."/>
            <person name="Maeda N."/>
            <person name="Oyama R."/>
            <person name="Ravasi T."/>
            <person name="Lenhard B."/>
            <person name="Wells C."/>
            <person name="Kodzius R."/>
            <person name="Shimokawa K."/>
            <person name="Bajic V.B."/>
            <person name="Brenner S.E."/>
            <person name="Batalov S."/>
            <person name="Forrest A.R."/>
            <person name="Zavolan M."/>
            <person name="Davis M.J."/>
            <person name="Wilming L.G."/>
            <person name="Aidinis V."/>
            <person name="Allen J.E."/>
            <person name="Ambesi-Impiombato A."/>
            <person name="Apweiler R."/>
            <person name="Aturaliya R.N."/>
            <person name="Bailey T.L."/>
            <person name="Bansal M."/>
            <person name="Baxter L."/>
            <person name="Beisel K.W."/>
            <person name="Bersano T."/>
            <person name="Bono H."/>
            <person name="Chalk A.M."/>
            <person name="Chiu K.P."/>
            <person name="Choudhary V."/>
            <person name="Christoffels A."/>
            <person name="Clutterbuck D.R."/>
            <person name="Crowe M.L."/>
            <person name="Dalla E."/>
            <person name="Dalrymple B.P."/>
            <person name="de Bono B."/>
            <person name="Della Gatta G."/>
            <person name="di Bernardo D."/>
            <person name="Down T."/>
            <person name="Engstrom P."/>
            <person name="Fagiolini M."/>
            <person name="Faulkner G."/>
            <person name="Fletcher C.F."/>
            <person name="Fukushima T."/>
            <person name="Furuno M."/>
            <person name="Futaki S."/>
            <person name="Gariboldi M."/>
            <person name="Georgii-Hemming P."/>
            <person name="Gingeras T.R."/>
            <person name="Gojobori T."/>
            <person name="Green R.E."/>
            <person name="Gustincich S."/>
            <person name="Harbers M."/>
            <person name="Hayashi Y."/>
            <person name="Hensch T.K."/>
            <person name="Hirokawa N."/>
            <person name="Hill D."/>
            <person name="Huminiecki L."/>
            <person name="Iacono M."/>
            <person name="Ikeo K."/>
            <person name="Iwama A."/>
            <person name="Ishikawa T."/>
            <person name="Jakt M."/>
            <person name="Kanapin A."/>
            <person name="Katoh M."/>
            <person name="Kawasawa Y."/>
            <person name="Kelso J."/>
            <person name="Kitamura H."/>
            <person name="Kitano H."/>
            <person name="Kollias G."/>
            <person name="Krishnan S.P."/>
            <person name="Kruger A."/>
            <person name="Kummerfeld S.K."/>
            <person name="Kurochkin I.V."/>
            <person name="Lareau L.F."/>
            <person name="Lazarevic D."/>
            <person name="Lipovich L."/>
            <person name="Liu J."/>
            <person name="Liuni S."/>
            <person name="McWilliam S."/>
            <person name="Madan Babu M."/>
            <person name="Madera M."/>
            <person name="Marchionni L."/>
            <person name="Matsuda H."/>
            <person name="Matsuzawa S."/>
            <person name="Miki H."/>
            <person name="Mignone F."/>
            <person name="Miyake S."/>
            <person name="Morris K."/>
            <person name="Mottagui-Tabar S."/>
            <person name="Mulder N."/>
            <person name="Nakano N."/>
            <person name="Nakauchi H."/>
            <person name="Ng P."/>
            <person name="Nilsson R."/>
            <person name="Nishiguchi S."/>
            <person name="Nishikawa S."/>
            <person name="Nori F."/>
            <person name="Ohara O."/>
            <person name="Okazaki Y."/>
            <person name="Orlando V."/>
            <person name="Pang K.C."/>
            <person name="Pavan W.J."/>
            <person name="Pavesi G."/>
            <person name="Pesole G."/>
            <person name="Petrovsky N."/>
            <person name="Piazza S."/>
            <person name="Reed J."/>
            <person name="Reid J.F."/>
            <person name="Ring B.Z."/>
            <person name="Ringwald M."/>
            <person name="Rost B."/>
            <person name="Ruan Y."/>
            <person name="Salzberg S.L."/>
            <person name="Sandelin A."/>
            <person name="Schneider C."/>
            <person name="Schoenbach C."/>
            <person name="Sekiguchi K."/>
            <person name="Semple C.A."/>
            <person name="Seno S."/>
            <person name="Sessa L."/>
            <person name="Sheng Y."/>
            <person name="Shibata Y."/>
            <person name="Shimada H."/>
            <person name="Shimada K."/>
            <person name="Silva D."/>
            <person name="Sinclair B."/>
            <person name="Sperling S."/>
            <person name="Stupka E."/>
            <person name="Sugiura K."/>
            <person name="Sultana R."/>
            <person name="Takenaka Y."/>
            <person name="Taki K."/>
            <person name="Tammoja K."/>
            <person name="Tan S.L."/>
            <person name="Tang S."/>
            <person name="Taylor M.S."/>
            <person name="Tegner J."/>
            <person name="Teichmann S.A."/>
            <person name="Ueda H.R."/>
            <person name="van Nimwegen E."/>
            <person name="Verardo R."/>
            <person name="Wei C.L."/>
            <person name="Yagi K."/>
            <person name="Yamanishi H."/>
            <person name="Zabarovsky E."/>
            <person name="Zhu S."/>
            <person name="Zimmer A."/>
            <person name="Hide W."/>
            <person name="Bult C."/>
            <person name="Grimmond S.M."/>
            <person name="Teasdale R.D."/>
            <person name="Liu E.T."/>
            <person name="Brusic V."/>
            <person name="Quackenbush J."/>
            <person name="Wahlestedt C."/>
            <person name="Mattick J.S."/>
            <person name="Hume D.A."/>
            <person name="Kai C."/>
            <person name="Sasaki D."/>
            <person name="Tomaru Y."/>
            <person name="Fukuda S."/>
            <person name="Kanamori-Katayama M."/>
            <person name="Suzuki M."/>
            <person name="Aoki J."/>
            <person name="Arakawa T."/>
            <person name="Iida J."/>
            <person name="Imamura K."/>
            <person name="Itoh M."/>
            <person name="Kato T."/>
            <person name="Kawaji H."/>
            <person name="Kawagashira N."/>
            <person name="Kawashima T."/>
            <person name="Kojima M."/>
            <person name="Kondo S."/>
            <person name="Konno H."/>
            <person name="Nakano K."/>
            <person name="Ninomiya N."/>
            <person name="Nishio T."/>
            <person name="Okada M."/>
            <person name="Plessy C."/>
            <person name="Shibata K."/>
            <person name="Shiraki T."/>
            <person name="Suzuki S."/>
            <person name="Tagami M."/>
            <person name="Waki K."/>
            <person name="Watahiki A."/>
            <person name="Okamura-Oho Y."/>
            <person name="Suzuki H."/>
            <person name="Kawai J."/>
            <person name="Hayashizaki Y."/>
        </authorList>
    </citation>
    <scope>NUCLEOTIDE SEQUENCE [LARGE SCALE MRNA]</scope>
    <source>
        <strain>C57BL/6J</strain>
    </source>
</reference>
<reference key="3">
    <citation type="journal article" date="2003" name="DNA Res.">
        <title>Prediction of the coding sequences of mouse homologues of KIAA gene: III. The complete nucleotide sequences of 500 mouse KIAA-homologous cDNAs identified by screening of terminal sequences of cDNA clones randomly sampled from size-fractionated libraries.</title>
        <authorList>
            <person name="Okazaki N."/>
            <person name="Kikuno R."/>
            <person name="Ohara R."/>
            <person name="Inamoto S."/>
            <person name="Koseki H."/>
            <person name="Hiraoka S."/>
            <person name="Saga Y."/>
            <person name="Nagase T."/>
            <person name="Ohara O."/>
            <person name="Koga H."/>
        </authorList>
    </citation>
    <scope>NUCLEOTIDE SEQUENCE [LARGE SCALE MRNA]</scope>
    <source>
        <tissue>Embryonic tail</tissue>
    </source>
</reference>
<reference key="4">
    <citation type="journal article" date="2004" name="Genome Res.">
        <title>The status, quality, and expansion of the NIH full-length cDNA project: the Mammalian Gene Collection (MGC).</title>
        <authorList>
            <consortium name="The MGC Project Team"/>
        </authorList>
    </citation>
    <scope>NUCLEOTIDE SEQUENCE [LARGE SCALE MRNA]</scope>
    <source>
        <strain>C57BL/6J</strain>
        <tissue>Brain</tissue>
    </source>
</reference>
<feature type="chain" id="PRO_0000047714" description="Zinc finger and BTB domain-containing protein 5">
    <location>
        <begin position="1"/>
        <end position="670"/>
    </location>
</feature>
<feature type="domain" description="BTB" evidence="2">
    <location>
        <begin position="24"/>
        <end position="93"/>
    </location>
</feature>
<feature type="zinc finger region" description="C2H2-type 1" evidence="3">
    <location>
        <begin position="606"/>
        <end position="628"/>
    </location>
</feature>
<feature type="zinc finger region" description="C2H2-type 2; atypical" evidence="3">
    <location>
        <begin position="634"/>
        <end position="657"/>
    </location>
</feature>
<feature type="region of interest" description="Disordered" evidence="4">
    <location>
        <begin position="158"/>
        <end position="256"/>
    </location>
</feature>
<feature type="region of interest" description="Disordered" evidence="4">
    <location>
        <begin position="268"/>
        <end position="382"/>
    </location>
</feature>
<feature type="region of interest" description="Disordered" evidence="4">
    <location>
        <begin position="414"/>
        <end position="433"/>
    </location>
</feature>
<feature type="region of interest" description="Disordered" evidence="4">
    <location>
        <begin position="442"/>
        <end position="470"/>
    </location>
</feature>
<feature type="compositionally biased region" description="Polar residues" evidence="4">
    <location>
        <begin position="170"/>
        <end position="181"/>
    </location>
</feature>
<feature type="compositionally biased region" description="Polar residues" evidence="4">
    <location>
        <begin position="285"/>
        <end position="295"/>
    </location>
</feature>
<feature type="compositionally biased region" description="Low complexity" evidence="4">
    <location>
        <begin position="345"/>
        <end position="360"/>
    </location>
</feature>
<feature type="compositionally biased region" description="Basic and acidic residues" evidence="4">
    <location>
        <begin position="361"/>
        <end position="374"/>
    </location>
</feature>
<feature type="compositionally biased region" description="Polar residues" evidence="4">
    <location>
        <begin position="414"/>
        <end position="432"/>
    </location>
</feature>
<feature type="compositionally biased region" description="Low complexity" evidence="4">
    <location>
        <begin position="444"/>
        <end position="459"/>
    </location>
</feature>
<feature type="modified residue" description="Phosphoserine" evidence="1">
    <location>
        <position position="234"/>
    </location>
</feature>
<feature type="modified residue" description="Phosphoserine" evidence="1">
    <location>
        <position position="366"/>
    </location>
</feature>
<feature type="cross-link" description="Glycyl lysine isopeptide (Lys-Gly) (interchain with G-Cter in SUMO2)" evidence="1">
    <location>
        <position position="239"/>
    </location>
</feature>
<feature type="cross-link" description="Glycyl lysine isopeptide (Lys-Gly) (interchain with G-Cter in SUMO2)" evidence="1">
    <location>
        <position position="317"/>
    </location>
</feature>
<feature type="cross-link" description="Glycyl lysine isopeptide (Lys-Gly) (interchain with G-Cter in SUMO2)" evidence="1">
    <location>
        <position position="325"/>
    </location>
</feature>
<feature type="cross-link" description="Glycyl lysine isopeptide (Lys-Gly) (interchain with G-Cter in SUMO2)" evidence="1">
    <location>
        <position position="399"/>
    </location>
</feature>
<feature type="cross-link" description="Glycyl lysine isopeptide (Lys-Gly) (interchain with G-Cter in SUMO2)" evidence="1">
    <location>
        <position position="410"/>
    </location>
</feature>
<feature type="cross-link" description="Glycyl lysine isopeptide (Lys-Gly) (interchain with G-Cter in SUMO2)" evidence="1">
    <location>
        <position position="535"/>
    </location>
</feature>
<feature type="cross-link" description="Glycyl lysine isopeptide (Lys-Gly) (interchain with G-Cter in SUMO2)" evidence="1">
    <location>
        <position position="587"/>
    </location>
</feature>
<feature type="cross-link" description="Glycyl lysine isopeptide (Lys-Gly) (interchain with G-Cter in SUMO2)" evidence="1">
    <location>
        <position position="590"/>
    </location>
</feature>
<feature type="cross-link" description="Glycyl lysine isopeptide (Lys-Gly) (interchain with G-Cter in SUMO2)" evidence="1">
    <location>
        <position position="638"/>
    </location>
</feature>
<feature type="cross-link" description="Glycyl lysine isopeptide (Lys-Gly) (interchain with G-Cter in SUMO2)" evidence="1">
    <location>
        <position position="651"/>
    </location>
</feature>
<feature type="sequence conflict" description="In Ref. 2; BAE35551." evidence="5" ref="2">
    <original>R</original>
    <variation>W</variation>
    <location>
        <position position="182"/>
    </location>
</feature>
<keyword id="KW-0238">DNA-binding</keyword>
<keyword id="KW-1017">Isopeptide bond</keyword>
<keyword id="KW-0479">Metal-binding</keyword>
<keyword id="KW-0539">Nucleus</keyword>
<keyword id="KW-0597">Phosphoprotein</keyword>
<keyword id="KW-1185">Reference proteome</keyword>
<keyword id="KW-0677">Repeat</keyword>
<keyword id="KW-0804">Transcription</keyword>
<keyword id="KW-0805">Transcription regulation</keyword>
<keyword id="KW-0832">Ubl conjugation</keyword>
<keyword id="KW-0862">Zinc</keyword>
<keyword id="KW-0863">Zinc-finger</keyword>
<evidence type="ECO:0000250" key="1">
    <source>
        <dbReference type="UniProtKB" id="O15062"/>
    </source>
</evidence>
<evidence type="ECO:0000255" key="2">
    <source>
        <dbReference type="PROSITE-ProRule" id="PRU00037"/>
    </source>
</evidence>
<evidence type="ECO:0000255" key="3">
    <source>
        <dbReference type="PROSITE-ProRule" id="PRU00042"/>
    </source>
</evidence>
<evidence type="ECO:0000256" key="4">
    <source>
        <dbReference type="SAM" id="MobiDB-lite"/>
    </source>
</evidence>
<evidence type="ECO:0000305" key="5"/>
<protein>
    <recommendedName>
        <fullName>Zinc finger and BTB domain-containing protein 5</fullName>
    </recommendedName>
    <alternativeName>
        <fullName>Transcription factor ZNF-POZ</fullName>
    </alternativeName>
</protein>
<comment type="function">
    <text>May be involved in transcriptional regulation.</text>
</comment>
<comment type="subcellular location">
    <subcellularLocation>
        <location evidence="5">Nucleus</location>
    </subcellularLocation>
</comment>
<comment type="sequence caution" evidence="5">
    <conflict type="erroneous initiation">
        <sequence resource="EMBL-CDS" id="BAC97934"/>
    </conflict>
</comment>
<name>ZBTB5_MOUSE</name>
<accession>Q7TQG0</accession>
<accession>Q3TVR7</accession>
<accession>Q6GV09</accession>
<accession>Q8BIB5</accession>
<dbReference type="EMBL" id="AY635051">
    <property type="protein sequence ID" value="AAT47717.1"/>
    <property type="molecule type" value="mRNA"/>
</dbReference>
<dbReference type="EMBL" id="AK160003">
    <property type="protein sequence ID" value="BAE35551.1"/>
    <property type="molecule type" value="mRNA"/>
</dbReference>
<dbReference type="EMBL" id="AK129124">
    <property type="protein sequence ID" value="BAC97934.1"/>
    <property type="status" value="ALT_INIT"/>
    <property type="molecule type" value="mRNA"/>
</dbReference>
<dbReference type="EMBL" id="BC054551">
    <property type="protein sequence ID" value="AAH54551.1"/>
    <property type="molecule type" value="mRNA"/>
</dbReference>
<dbReference type="EMBL" id="BC057545">
    <property type="protein sequence ID" value="AAH57545.1"/>
    <property type="molecule type" value="mRNA"/>
</dbReference>
<dbReference type="CCDS" id="CCDS18129.1"/>
<dbReference type="RefSeq" id="NP_001156755.1">
    <property type="nucleotide sequence ID" value="NM_001163283.1"/>
</dbReference>
<dbReference type="RefSeq" id="NP_001156756.1">
    <property type="nucleotide sequence ID" value="NM_001163284.1"/>
</dbReference>
<dbReference type="RefSeq" id="NP_775575.2">
    <property type="nucleotide sequence ID" value="NM_173399.3"/>
</dbReference>
<dbReference type="SMR" id="Q7TQG0"/>
<dbReference type="FunCoup" id="Q7TQG0">
    <property type="interactions" value="3657"/>
</dbReference>
<dbReference type="STRING" id="10090.ENSMUSP00000136507"/>
<dbReference type="GlyGen" id="Q7TQG0">
    <property type="glycosylation" value="1 site"/>
</dbReference>
<dbReference type="iPTMnet" id="Q7TQG0"/>
<dbReference type="PhosphoSitePlus" id="Q7TQG0"/>
<dbReference type="PaxDb" id="10090-ENSMUSP00000103447"/>
<dbReference type="ProteomicsDB" id="302108"/>
<dbReference type="Antibodypedia" id="26273">
    <property type="antibodies" value="141 antibodies from 24 providers"/>
</dbReference>
<dbReference type="DNASU" id="230119"/>
<dbReference type="Ensembl" id="ENSMUST00000055028.9">
    <property type="protein sequence ID" value="ENSMUSP00000059919.9"/>
    <property type="gene ID" value="ENSMUSG00000049657.10"/>
</dbReference>
<dbReference type="Ensembl" id="ENSMUST00000107817.3">
    <property type="protein sequence ID" value="ENSMUSP00000103447.3"/>
    <property type="gene ID" value="ENSMUSG00000049657.10"/>
</dbReference>
<dbReference type="Ensembl" id="ENSMUST00000180217.2">
    <property type="protein sequence ID" value="ENSMUSP00000136507.2"/>
    <property type="gene ID" value="ENSMUSG00000049657.10"/>
</dbReference>
<dbReference type="GeneID" id="230119"/>
<dbReference type="KEGG" id="mmu:230119"/>
<dbReference type="UCSC" id="uc008ssc.2">
    <property type="organism name" value="mouse"/>
</dbReference>
<dbReference type="AGR" id="MGI:1924601"/>
<dbReference type="CTD" id="9925"/>
<dbReference type="MGI" id="MGI:1924601">
    <property type="gene designation" value="Zbtb5"/>
</dbReference>
<dbReference type="VEuPathDB" id="HostDB:ENSMUSG00000049657"/>
<dbReference type="eggNOG" id="KOG1721">
    <property type="taxonomic scope" value="Eukaryota"/>
</dbReference>
<dbReference type="GeneTree" id="ENSGT00940000160246"/>
<dbReference type="HOGENOM" id="CLU_407055_0_0_1"/>
<dbReference type="InParanoid" id="Q7TQG0"/>
<dbReference type="OMA" id="CRIDNDT"/>
<dbReference type="OrthoDB" id="8117402at2759"/>
<dbReference type="PhylomeDB" id="Q7TQG0"/>
<dbReference type="TreeFam" id="TF330979"/>
<dbReference type="BioGRID-ORCS" id="230119">
    <property type="hits" value="1 hit in 79 CRISPR screens"/>
</dbReference>
<dbReference type="PRO" id="PR:Q7TQG0"/>
<dbReference type="Proteomes" id="UP000000589">
    <property type="component" value="Chromosome 4"/>
</dbReference>
<dbReference type="RNAct" id="Q7TQG0">
    <property type="molecule type" value="protein"/>
</dbReference>
<dbReference type="Bgee" id="ENSMUSG00000049657">
    <property type="expression patterns" value="Expressed in spermatid and 76 other cell types or tissues"/>
</dbReference>
<dbReference type="ExpressionAtlas" id="Q7TQG0">
    <property type="expression patterns" value="baseline and differential"/>
</dbReference>
<dbReference type="GO" id="GO:0005634">
    <property type="term" value="C:nucleus"/>
    <property type="evidence" value="ECO:0007669"/>
    <property type="project" value="UniProtKB-SubCell"/>
</dbReference>
<dbReference type="GO" id="GO:0001227">
    <property type="term" value="F:DNA-binding transcription repressor activity, RNA polymerase II-specific"/>
    <property type="evidence" value="ECO:0007669"/>
    <property type="project" value="Ensembl"/>
</dbReference>
<dbReference type="GO" id="GO:0000977">
    <property type="term" value="F:RNA polymerase II transcription regulatory region sequence-specific DNA binding"/>
    <property type="evidence" value="ECO:0007669"/>
    <property type="project" value="Ensembl"/>
</dbReference>
<dbReference type="GO" id="GO:0008270">
    <property type="term" value="F:zinc ion binding"/>
    <property type="evidence" value="ECO:0007669"/>
    <property type="project" value="UniProtKB-KW"/>
</dbReference>
<dbReference type="CDD" id="cd18196">
    <property type="entry name" value="BTB_POZ_ZBTB5"/>
    <property type="match status" value="1"/>
</dbReference>
<dbReference type="FunFam" id="3.30.710.10:FF:000061">
    <property type="entry name" value="Zinc finger and BTB domain-containing protein 5"/>
    <property type="match status" value="1"/>
</dbReference>
<dbReference type="FunFam" id="3.30.160.60:FF:000250">
    <property type="entry name" value="zinc finger protein 197 isoform X1"/>
    <property type="match status" value="1"/>
</dbReference>
<dbReference type="Gene3D" id="3.30.160.60">
    <property type="entry name" value="Classic Zinc Finger"/>
    <property type="match status" value="2"/>
</dbReference>
<dbReference type="Gene3D" id="3.30.710.10">
    <property type="entry name" value="Potassium Channel Kv1.1, Chain A"/>
    <property type="match status" value="1"/>
</dbReference>
<dbReference type="InterPro" id="IPR000210">
    <property type="entry name" value="BTB/POZ_dom"/>
</dbReference>
<dbReference type="InterPro" id="IPR011333">
    <property type="entry name" value="SKP1/BTB/POZ_sf"/>
</dbReference>
<dbReference type="InterPro" id="IPR036236">
    <property type="entry name" value="Znf_C2H2_sf"/>
</dbReference>
<dbReference type="InterPro" id="IPR013087">
    <property type="entry name" value="Znf_C2H2_type"/>
</dbReference>
<dbReference type="InterPro" id="IPR050457">
    <property type="entry name" value="ZnFinger_BTB_dom_contain"/>
</dbReference>
<dbReference type="PANTHER" id="PTHR46105">
    <property type="entry name" value="AGAP004733-PA"/>
    <property type="match status" value="1"/>
</dbReference>
<dbReference type="PANTHER" id="PTHR46105:SF28">
    <property type="entry name" value="ZINC FINGER PROTEIN 37-LIKE"/>
    <property type="match status" value="1"/>
</dbReference>
<dbReference type="Pfam" id="PF00651">
    <property type="entry name" value="BTB"/>
    <property type="match status" value="1"/>
</dbReference>
<dbReference type="SMART" id="SM00225">
    <property type="entry name" value="BTB"/>
    <property type="match status" value="1"/>
</dbReference>
<dbReference type="SMART" id="SM00355">
    <property type="entry name" value="ZnF_C2H2"/>
    <property type="match status" value="2"/>
</dbReference>
<dbReference type="SUPFAM" id="SSF57667">
    <property type="entry name" value="beta-beta-alpha zinc fingers"/>
    <property type="match status" value="1"/>
</dbReference>
<dbReference type="SUPFAM" id="SSF54695">
    <property type="entry name" value="POZ domain"/>
    <property type="match status" value="1"/>
</dbReference>
<dbReference type="PROSITE" id="PS50097">
    <property type="entry name" value="BTB"/>
    <property type="match status" value="1"/>
</dbReference>
<dbReference type="PROSITE" id="PS00028">
    <property type="entry name" value="ZINC_FINGER_C2H2_1"/>
    <property type="match status" value="1"/>
</dbReference>
<dbReference type="PROSITE" id="PS50157">
    <property type="entry name" value="ZINC_FINGER_C2H2_2"/>
    <property type="match status" value="2"/>
</dbReference>
<sequence>MDFPGHFEQIFQQLNYQRLHGQLCDCVIVVGNRHFKAHRSVLAACSTHFRALFSVAEGDQTMNMIQLDSEVVTAEAFAALIDMMYTSTLMLGESNVMDVLLAASHLHLNSVVKACKHYLTTRTLPMSPSSERAQEQSARMQRSFMLQQLGLSIVSSALSSSQSAEEPTAPMSSSMRSSLDQRTPFPMRRLHKRKQSVEERARQRLRSSMEESAISDVTPESGPAGVHSREEFFSPDSLKIVDNPKPDGMADNQEDGAMMFDRPFGAQEDAQVPSQSDGSAGNMASRATQVETSFEQEAVAEKGSFQCENPEVGLGEKEHMRVVVKSEPLSSPEPQDEVSDVTSQAEGSESVEVEGVVVSAEKIDLSPESSDRSFSDPQSSTDRVGDIHILEVTNNLEHKTSFSISNFLNKSRGSNFSASQSTDDNLPNTTSDCRLEGEAPYLLSPEAGPAGGPSSAPGSHVENPFSEPADSHFVRPMQEVMGLPCVQTSGYQGEQFGMDFSRSGLGLHSSFSRAMMGSPRGGASNFPYYRRIAPKMPVVTSVRSSQISENSASSQLMMNGATSFENGHTSQPGPPQLTRASADVLSKCKKALSEHNVLVVEGARKYACKICCKTFLTLTDCKKHIRVHTGEKPYACLKCGKRFSQSSHLYKHSKTTCLRWQSSNLPSTLL</sequence>